<organism>
    <name type="scientific">Bifidobacterium adolescentis (strain ATCC 15703 / DSM 20083 / NCTC 11814 / E194a)</name>
    <dbReference type="NCBI Taxonomy" id="367928"/>
    <lineage>
        <taxon>Bacteria</taxon>
        <taxon>Bacillati</taxon>
        <taxon>Actinomycetota</taxon>
        <taxon>Actinomycetes</taxon>
        <taxon>Bifidobacteriales</taxon>
        <taxon>Bifidobacteriaceae</taxon>
        <taxon>Bifidobacterium</taxon>
    </lineage>
</organism>
<reference key="1">
    <citation type="submission" date="2001-07" db="EMBL/GenBank/DDBJ databases">
        <title>Phylogenetic development research of Bifidobacteria through the hsp60 gene.</title>
        <authorList>
            <person name="Jian W."/>
            <person name="Dong X."/>
        </authorList>
    </citation>
    <scope>NUCLEOTIDE SEQUENCE [GENOMIC DNA]</scope>
</reference>
<reference key="2">
    <citation type="submission" date="2006-12" db="EMBL/GenBank/DDBJ databases">
        <title>Bifidobacterium adolescentis complete genome sequence.</title>
        <authorList>
            <person name="Suzuki T."/>
            <person name="Tsuda Y."/>
            <person name="Kanou N."/>
            <person name="Inoue T."/>
            <person name="Kumazaki K."/>
            <person name="Nagano S."/>
            <person name="Hirai S."/>
            <person name="Tanaka K."/>
            <person name="Watanabe K."/>
        </authorList>
    </citation>
    <scope>NUCLEOTIDE SEQUENCE [LARGE SCALE GENOMIC DNA]</scope>
    <source>
        <strain>ATCC 15703 / DSM 20083 / NCTC 11814 / E194a</strain>
    </source>
</reference>
<keyword id="KW-0067">ATP-binding</keyword>
<keyword id="KW-0143">Chaperone</keyword>
<keyword id="KW-0963">Cytoplasm</keyword>
<keyword id="KW-0413">Isomerase</keyword>
<keyword id="KW-0547">Nucleotide-binding</keyword>
<keyword id="KW-1185">Reference proteome</keyword>
<gene>
    <name evidence="1" type="primary">groEL</name>
    <name evidence="1" type="synonym">groL</name>
    <name type="synonym">hsp60</name>
    <name type="ordered locus">BAD_0565</name>
</gene>
<dbReference type="EC" id="5.6.1.7" evidence="1"/>
<dbReference type="EMBL" id="AF210319">
    <property type="protein sequence ID" value="AAF18475.2"/>
    <property type="molecule type" value="Genomic_DNA"/>
</dbReference>
<dbReference type="EMBL" id="AP009256">
    <property type="protein sequence ID" value="BAF39346.1"/>
    <property type="molecule type" value="Genomic_DNA"/>
</dbReference>
<dbReference type="RefSeq" id="WP_011743003.1">
    <property type="nucleotide sequence ID" value="NC_008618.1"/>
</dbReference>
<dbReference type="SMR" id="Q9REU4"/>
<dbReference type="STRING" id="367928.BAD_0565"/>
<dbReference type="PaxDb" id="1680-BADO_0578"/>
<dbReference type="GeneID" id="4556139"/>
<dbReference type="KEGG" id="bad:BAD_0565"/>
<dbReference type="HOGENOM" id="CLU_016503_3_0_11"/>
<dbReference type="Proteomes" id="UP000008702">
    <property type="component" value="Chromosome"/>
</dbReference>
<dbReference type="GO" id="GO:0005737">
    <property type="term" value="C:cytoplasm"/>
    <property type="evidence" value="ECO:0007669"/>
    <property type="project" value="UniProtKB-SubCell"/>
</dbReference>
<dbReference type="GO" id="GO:0005524">
    <property type="term" value="F:ATP binding"/>
    <property type="evidence" value="ECO:0007669"/>
    <property type="project" value="UniProtKB-UniRule"/>
</dbReference>
<dbReference type="GO" id="GO:0140662">
    <property type="term" value="F:ATP-dependent protein folding chaperone"/>
    <property type="evidence" value="ECO:0007669"/>
    <property type="project" value="InterPro"/>
</dbReference>
<dbReference type="GO" id="GO:0016853">
    <property type="term" value="F:isomerase activity"/>
    <property type="evidence" value="ECO:0007669"/>
    <property type="project" value="UniProtKB-KW"/>
</dbReference>
<dbReference type="GO" id="GO:0051082">
    <property type="term" value="F:unfolded protein binding"/>
    <property type="evidence" value="ECO:0007669"/>
    <property type="project" value="UniProtKB-UniRule"/>
</dbReference>
<dbReference type="GO" id="GO:0042026">
    <property type="term" value="P:protein refolding"/>
    <property type="evidence" value="ECO:0007669"/>
    <property type="project" value="UniProtKB-UniRule"/>
</dbReference>
<dbReference type="CDD" id="cd03344">
    <property type="entry name" value="GroEL"/>
    <property type="match status" value="1"/>
</dbReference>
<dbReference type="FunFam" id="3.50.7.10:FF:000001">
    <property type="entry name" value="60 kDa chaperonin"/>
    <property type="match status" value="1"/>
</dbReference>
<dbReference type="Gene3D" id="3.50.7.10">
    <property type="entry name" value="GroEL"/>
    <property type="match status" value="1"/>
</dbReference>
<dbReference type="Gene3D" id="1.10.560.10">
    <property type="entry name" value="GroEL-like equatorial domain"/>
    <property type="match status" value="1"/>
</dbReference>
<dbReference type="Gene3D" id="3.30.260.10">
    <property type="entry name" value="TCP-1-like chaperonin intermediate domain"/>
    <property type="match status" value="1"/>
</dbReference>
<dbReference type="HAMAP" id="MF_00600">
    <property type="entry name" value="CH60"/>
    <property type="match status" value="1"/>
</dbReference>
<dbReference type="InterPro" id="IPR018370">
    <property type="entry name" value="Chaperonin_Cpn60_CS"/>
</dbReference>
<dbReference type="InterPro" id="IPR001844">
    <property type="entry name" value="Cpn60/GroEL"/>
</dbReference>
<dbReference type="InterPro" id="IPR002423">
    <property type="entry name" value="Cpn60/GroEL/TCP-1"/>
</dbReference>
<dbReference type="InterPro" id="IPR027409">
    <property type="entry name" value="GroEL-like_apical_dom_sf"/>
</dbReference>
<dbReference type="InterPro" id="IPR027413">
    <property type="entry name" value="GROEL-like_equatorial_sf"/>
</dbReference>
<dbReference type="InterPro" id="IPR027410">
    <property type="entry name" value="TCP-1-like_intermed_sf"/>
</dbReference>
<dbReference type="NCBIfam" id="TIGR02348">
    <property type="entry name" value="GroEL"/>
    <property type="match status" value="1"/>
</dbReference>
<dbReference type="NCBIfam" id="NF000592">
    <property type="entry name" value="PRK00013.1"/>
    <property type="match status" value="1"/>
</dbReference>
<dbReference type="NCBIfam" id="NF009487">
    <property type="entry name" value="PRK12849.1"/>
    <property type="match status" value="1"/>
</dbReference>
<dbReference type="NCBIfam" id="NF009488">
    <property type="entry name" value="PRK12850.1"/>
    <property type="match status" value="1"/>
</dbReference>
<dbReference type="NCBIfam" id="NF009489">
    <property type="entry name" value="PRK12851.1"/>
    <property type="match status" value="1"/>
</dbReference>
<dbReference type="PANTHER" id="PTHR45633">
    <property type="entry name" value="60 KDA HEAT SHOCK PROTEIN, MITOCHONDRIAL"/>
    <property type="match status" value="1"/>
</dbReference>
<dbReference type="Pfam" id="PF00118">
    <property type="entry name" value="Cpn60_TCP1"/>
    <property type="match status" value="1"/>
</dbReference>
<dbReference type="PRINTS" id="PR00298">
    <property type="entry name" value="CHAPERONIN60"/>
</dbReference>
<dbReference type="SUPFAM" id="SSF52029">
    <property type="entry name" value="GroEL apical domain-like"/>
    <property type="match status" value="1"/>
</dbReference>
<dbReference type="SUPFAM" id="SSF48592">
    <property type="entry name" value="GroEL equatorial domain-like"/>
    <property type="match status" value="1"/>
</dbReference>
<dbReference type="SUPFAM" id="SSF54849">
    <property type="entry name" value="GroEL-intermediate domain like"/>
    <property type="match status" value="1"/>
</dbReference>
<dbReference type="PROSITE" id="PS00296">
    <property type="entry name" value="CHAPERONINS_CPN60"/>
    <property type="match status" value="1"/>
</dbReference>
<name>CH60_BIFAA</name>
<protein>
    <recommendedName>
        <fullName evidence="1">Chaperonin GroEL</fullName>
        <ecNumber evidence="1">5.6.1.7</ecNumber>
    </recommendedName>
    <alternativeName>
        <fullName evidence="1">60 kDa chaperonin</fullName>
    </alternativeName>
    <alternativeName>
        <fullName evidence="1">Chaperonin-60</fullName>
        <shortName evidence="1">Cpn60</shortName>
    </alternativeName>
</protein>
<sequence>MAKMIAYDDEARQGMLAGLDKLADTVKVTLGPKGRNVVLDKTYGAPTITNDGVSIAKEIDLDDPYERIGAELVKEVAKKTDDVAGDGTTTATVLAQSLVHEGLKNVTAGSNPIALRRGIEKAADAIVKELVAAAKDVETKDQIAATATISAADPEVGEKIAEALDKVGQDGVVTVEDNNRFGLDLDFTEGMRFDKGYIAPYFVTNAEDQTAVLEDPYILLTSGKLSSQQDVVHIAELVMKTGKPLLIIAEDVDGEALPTLILNNIRGTFKSCAVKAPGFGDRRKAMLQDMAILTGAQVVSDELGLKLDSVDMSVLGTAKKVIVSKDETTIVSGGGSKEDVAARVAQIRGEIANTDSDYDREKLQERLAKLAGGVAVIKVGAATEVEAKERKHRIEDAVRNAKAAIEEGLLPGGGVALIQAAAKAKDDVKLEGDEATGAAIVFRAVEAPIKQIAENAGLSGDVVIDKVRSLPDGQGLNAATNEYEDLLAAGVTDPVKVTRSALQNAASIAGLFLTTEAVVANKPEPPAAAPAAGADMGY</sequence>
<proteinExistence type="inferred from homology"/>
<accession>Q9REU4</accession>
<accession>A1A0W3</accession>
<evidence type="ECO:0000255" key="1">
    <source>
        <dbReference type="HAMAP-Rule" id="MF_00600"/>
    </source>
</evidence>
<evidence type="ECO:0000305" key="2"/>
<comment type="function">
    <text evidence="1">Together with its co-chaperonin GroES, plays an essential role in assisting protein folding. The GroEL-GroES system forms a nano-cage that allows encapsulation of the non-native substrate proteins and provides a physical environment optimized to promote and accelerate protein folding.</text>
</comment>
<comment type="catalytic activity">
    <reaction evidence="1">
        <text>ATP + H2O + a folded polypeptide = ADP + phosphate + an unfolded polypeptide.</text>
        <dbReference type="EC" id="5.6.1.7"/>
    </reaction>
</comment>
<comment type="subunit">
    <text evidence="1">Forms a cylinder of 14 subunits composed of two heptameric rings stacked back-to-back. Interacts with the co-chaperonin GroES.</text>
</comment>
<comment type="subcellular location">
    <subcellularLocation>
        <location evidence="1">Cytoplasm</location>
    </subcellularLocation>
</comment>
<comment type="similarity">
    <text evidence="1">Belongs to the chaperonin (HSP60) family.</text>
</comment>
<feature type="chain" id="PRO_0000063286" description="Chaperonin GroEL">
    <location>
        <begin position="1"/>
        <end position="538"/>
    </location>
</feature>
<feature type="binding site" evidence="1">
    <location>
        <begin position="29"/>
        <end position="32"/>
    </location>
    <ligand>
        <name>ATP</name>
        <dbReference type="ChEBI" id="CHEBI:30616"/>
    </ligand>
</feature>
<feature type="binding site" evidence="1">
    <location>
        <begin position="86"/>
        <end position="90"/>
    </location>
    <ligand>
        <name>ATP</name>
        <dbReference type="ChEBI" id="CHEBI:30616"/>
    </ligand>
</feature>
<feature type="binding site" evidence="1">
    <location>
        <position position="413"/>
    </location>
    <ligand>
        <name>ATP</name>
        <dbReference type="ChEBI" id="CHEBI:30616"/>
    </ligand>
</feature>
<feature type="binding site" evidence="1">
    <location>
        <begin position="477"/>
        <end position="479"/>
    </location>
    <ligand>
        <name>ATP</name>
        <dbReference type="ChEBI" id="CHEBI:30616"/>
    </ligand>
</feature>
<feature type="binding site" evidence="1">
    <location>
        <position position="493"/>
    </location>
    <ligand>
        <name>ATP</name>
        <dbReference type="ChEBI" id="CHEBI:30616"/>
    </ligand>
</feature>
<feature type="sequence conflict" description="In Ref. 1; AAF18475." evidence="2" ref="1">
    <original>GADMGY</original>
    <variation>VFPLRRNAGTRRFPAPSSTTRAWLTSNGLMVATSMSTIGCVLAIMRMALK</variation>
    <location>
        <begin position="533"/>
        <end position="538"/>
    </location>
</feature>